<name>GATA_BURM9</name>
<organism>
    <name type="scientific">Burkholderia mallei (strain NCTC 10229)</name>
    <dbReference type="NCBI Taxonomy" id="412022"/>
    <lineage>
        <taxon>Bacteria</taxon>
        <taxon>Pseudomonadati</taxon>
        <taxon>Pseudomonadota</taxon>
        <taxon>Betaproteobacteria</taxon>
        <taxon>Burkholderiales</taxon>
        <taxon>Burkholderiaceae</taxon>
        <taxon>Burkholderia</taxon>
        <taxon>pseudomallei group</taxon>
    </lineage>
</organism>
<feature type="chain" id="PRO_1000015809" description="Glutamyl-tRNA(Gln) amidotransferase subunit A">
    <location>
        <begin position="1"/>
        <end position="496"/>
    </location>
</feature>
<feature type="active site" description="Charge relay system" evidence="1">
    <location>
        <position position="75"/>
    </location>
</feature>
<feature type="active site" description="Charge relay system" evidence="1">
    <location>
        <position position="150"/>
    </location>
</feature>
<feature type="active site" description="Acyl-ester intermediate" evidence="1">
    <location>
        <position position="174"/>
    </location>
</feature>
<proteinExistence type="inferred from homology"/>
<reference key="1">
    <citation type="journal article" date="2010" name="Genome Biol. Evol.">
        <title>Continuing evolution of Burkholderia mallei through genome reduction and large-scale rearrangements.</title>
        <authorList>
            <person name="Losada L."/>
            <person name="Ronning C.M."/>
            <person name="DeShazer D."/>
            <person name="Woods D."/>
            <person name="Fedorova N."/>
            <person name="Kim H.S."/>
            <person name="Shabalina S.A."/>
            <person name="Pearson T.R."/>
            <person name="Brinkac L."/>
            <person name="Tan P."/>
            <person name="Nandi T."/>
            <person name="Crabtree J."/>
            <person name="Badger J."/>
            <person name="Beckstrom-Sternberg S."/>
            <person name="Saqib M."/>
            <person name="Schutzer S.E."/>
            <person name="Keim P."/>
            <person name="Nierman W.C."/>
        </authorList>
    </citation>
    <scope>NUCLEOTIDE SEQUENCE [LARGE SCALE GENOMIC DNA]</scope>
    <source>
        <strain>NCTC 10229</strain>
    </source>
</reference>
<sequence>MHAKSLTELRAALDAKECSAVELAQHYLKRIDAARDLNAFVHVDAELTLAQAKAADAALANGEAGPLAGLPIVHKDVFVTRGWRSTAGSKMLANYASPFDATVVARLSAAGMVTLGKTNMDEFAMGSSNENSAFGPVKNPWDTSAVPGGSSGGSSAAVAARLAPAATGTDTGGSIRQPASFAGVTGIKPTYGRVSRYGMIAFASSLDQGGPMARSAADCALLLNAMAGFDERDSTSLERADEDYTRHLGKAWAAGGDAGKPLAGLRIGLPAEYFGAGLADDVRAAIDAALKTYEALGATLVPVSLPKTELSIPVYYVIAPAEASSNLSRFDGVRYGHRAAEYRDLLDMYKKSRAEGFGPEVKRRILVGTYVLSHGYYDAYYLQAQKIRRIIAQDFQEAFKSCDVIMGPASPTVAWDIGAKGDDPVQMYLADIYTLSVSLAGLPGMSVPCGFGAGANAKRPVGLQIIGNYFDEARMLQVADAFQRATDWHVQEPAGV</sequence>
<dbReference type="EC" id="6.3.5.7" evidence="1"/>
<dbReference type="EMBL" id="CP000546">
    <property type="protein sequence ID" value="ABN02265.1"/>
    <property type="molecule type" value="Genomic_DNA"/>
</dbReference>
<dbReference type="RefSeq" id="WP_004189326.1">
    <property type="nucleotide sequence ID" value="NC_008836.1"/>
</dbReference>
<dbReference type="SMR" id="A2S8I9"/>
<dbReference type="GeneID" id="92977942"/>
<dbReference type="KEGG" id="bml:BMA10229_A2296"/>
<dbReference type="HOGENOM" id="CLU_009600_0_3_4"/>
<dbReference type="Proteomes" id="UP000002283">
    <property type="component" value="Chromosome I"/>
</dbReference>
<dbReference type="GO" id="GO:0030956">
    <property type="term" value="C:glutamyl-tRNA(Gln) amidotransferase complex"/>
    <property type="evidence" value="ECO:0007669"/>
    <property type="project" value="InterPro"/>
</dbReference>
<dbReference type="GO" id="GO:0005524">
    <property type="term" value="F:ATP binding"/>
    <property type="evidence" value="ECO:0007669"/>
    <property type="project" value="UniProtKB-KW"/>
</dbReference>
<dbReference type="GO" id="GO:0050567">
    <property type="term" value="F:glutaminyl-tRNA synthase (glutamine-hydrolyzing) activity"/>
    <property type="evidence" value="ECO:0007669"/>
    <property type="project" value="UniProtKB-UniRule"/>
</dbReference>
<dbReference type="GO" id="GO:0006412">
    <property type="term" value="P:translation"/>
    <property type="evidence" value="ECO:0007669"/>
    <property type="project" value="UniProtKB-UniRule"/>
</dbReference>
<dbReference type="Gene3D" id="3.90.1300.10">
    <property type="entry name" value="Amidase signature (AS) domain"/>
    <property type="match status" value="1"/>
</dbReference>
<dbReference type="HAMAP" id="MF_00120">
    <property type="entry name" value="GatA"/>
    <property type="match status" value="1"/>
</dbReference>
<dbReference type="InterPro" id="IPR000120">
    <property type="entry name" value="Amidase"/>
</dbReference>
<dbReference type="InterPro" id="IPR020556">
    <property type="entry name" value="Amidase_CS"/>
</dbReference>
<dbReference type="InterPro" id="IPR023631">
    <property type="entry name" value="Amidase_dom"/>
</dbReference>
<dbReference type="InterPro" id="IPR036928">
    <property type="entry name" value="AS_sf"/>
</dbReference>
<dbReference type="InterPro" id="IPR004412">
    <property type="entry name" value="GatA"/>
</dbReference>
<dbReference type="NCBIfam" id="TIGR00132">
    <property type="entry name" value="gatA"/>
    <property type="match status" value="1"/>
</dbReference>
<dbReference type="PANTHER" id="PTHR11895:SF151">
    <property type="entry name" value="GLUTAMYL-TRNA(GLN) AMIDOTRANSFERASE SUBUNIT A"/>
    <property type="match status" value="1"/>
</dbReference>
<dbReference type="PANTHER" id="PTHR11895">
    <property type="entry name" value="TRANSAMIDASE"/>
    <property type="match status" value="1"/>
</dbReference>
<dbReference type="Pfam" id="PF01425">
    <property type="entry name" value="Amidase"/>
    <property type="match status" value="1"/>
</dbReference>
<dbReference type="SUPFAM" id="SSF75304">
    <property type="entry name" value="Amidase signature (AS) enzymes"/>
    <property type="match status" value="1"/>
</dbReference>
<dbReference type="PROSITE" id="PS00571">
    <property type="entry name" value="AMIDASES"/>
    <property type="match status" value="1"/>
</dbReference>
<accession>A2S8I9</accession>
<evidence type="ECO:0000255" key="1">
    <source>
        <dbReference type="HAMAP-Rule" id="MF_00120"/>
    </source>
</evidence>
<gene>
    <name evidence="1" type="primary">gatA</name>
    <name type="ordered locus">BMA10229_A2296</name>
</gene>
<comment type="function">
    <text evidence="1">Allows the formation of correctly charged Gln-tRNA(Gln) through the transamidation of misacylated Glu-tRNA(Gln) in organisms which lack glutaminyl-tRNA synthetase. The reaction takes place in the presence of glutamine and ATP through an activated gamma-phospho-Glu-tRNA(Gln).</text>
</comment>
<comment type="catalytic activity">
    <reaction evidence="1">
        <text>L-glutamyl-tRNA(Gln) + L-glutamine + ATP + H2O = L-glutaminyl-tRNA(Gln) + L-glutamate + ADP + phosphate + H(+)</text>
        <dbReference type="Rhea" id="RHEA:17521"/>
        <dbReference type="Rhea" id="RHEA-COMP:9681"/>
        <dbReference type="Rhea" id="RHEA-COMP:9684"/>
        <dbReference type="ChEBI" id="CHEBI:15377"/>
        <dbReference type="ChEBI" id="CHEBI:15378"/>
        <dbReference type="ChEBI" id="CHEBI:29985"/>
        <dbReference type="ChEBI" id="CHEBI:30616"/>
        <dbReference type="ChEBI" id="CHEBI:43474"/>
        <dbReference type="ChEBI" id="CHEBI:58359"/>
        <dbReference type="ChEBI" id="CHEBI:78520"/>
        <dbReference type="ChEBI" id="CHEBI:78521"/>
        <dbReference type="ChEBI" id="CHEBI:456216"/>
        <dbReference type="EC" id="6.3.5.7"/>
    </reaction>
</comment>
<comment type="subunit">
    <text evidence="1">Heterotrimer of A, B and C subunits.</text>
</comment>
<comment type="similarity">
    <text evidence="1">Belongs to the amidase family. GatA subfamily.</text>
</comment>
<keyword id="KW-0067">ATP-binding</keyword>
<keyword id="KW-0436">Ligase</keyword>
<keyword id="KW-0547">Nucleotide-binding</keyword>
<keyword id="KW-0648">Protein biosynthesis</keyword>
<protein>
    <recommendedName>
        <fullName evidence="1">Glutamyl-tRNA(Gln) amidotransferase subunit A</fullName>
        <shortName evidence="1">Glu-ADT subunit A</shortName>
        <ecNumber evidence="1">6.3.5.7</ecNumber>
    </recommendedName>
</protein>